<reference key="1">
    <citation type="journal article" date="2007" name="Science">
        <title>Legumes symbioses: absence of nod genes in photosynthetic bradyrhizobia.</title>
        <authorList>
            <person name="Giraud E."/>
            <person name="Moulin L."/>
            <person name="Vallenet D."/>
            <person name="Barbe V."/>
            <person name="Cytryn E."/>
            <person name="Avarre J.-C."/>
            <person name="Jaubert M."/>
            <person name="Simon D."/>
            <person name="Cartieaux F."/>
            <person name="Prin Y."/>
            <person name="Bena G."/>
            <person name="Hannibal L."/>
            <person name="Fardoux J."/>
            <person name="Kojadinovic M."/>
            <person name="Vuillet L."/>
            <person name="Lajus A."/>
            <person name="Cruveiller S."/>
            <person name="Rouy Z."/>
            <person name="Mangenot S."/>
            <person name="Segurens B."/>
            <person name="Dossat C."/>
            <person name="Franck W.L."/>
            <person name="Chang W.-S."/>
            <person name="Saunders E."/>
            <person name="Bruce D."/>
            <person name="Richardson P."/>
            <person name="Normand P."/>
            <person name="Dreyfus B."/>
            <person name="Pignol D."/>
            <person name="Stacey G."/>
            <person name="Emerich D."/>
            <person name="Vermeglio A."/>
            <person name="Medigue C."/>
            <person name="Sadowsky M."/>
        </authorList>
    </citation>
    <scope>NUCLEOTIDE SEQUENCE [LARGE SCALE GENOMIC DNA]</scope>
    <source>
        <strain>ORS 278</strain>
    </source>
</reference>
<organism>
    <name type="scientific">Bradyrhizobium sp. (strain ORS 278)</name>
    <dbReference type="NCBI Taxonomy" id="114615"/>
    <lineage>
        <taxon>Bacteria</taxon>
        <taxon>Pseudomonadati</taxon>
        <taxon>Pseudomonadota</taxon>
        <taxon>Alphaproteobacteria</taxon>
        <taxon>Hyphomicrobiales</taxon>
        <taxon>Nitrobacteraceae</taxon>
        <taxon>Bradyrhizobium</taxon>
    </lineage>
</organism>
<dbReference type="EMBL" id="CU234118">
    <property type="protein sequence ID" value="CAL80292.1"/>
    <property type="molecule type" value="Genomic_DNA"/>
</dbReference>
<dbReference type="RefSeq" id="WP_012030160.1">
    <property type="nucleotide sequence ID" value="NC_009445.1"/>
</dbReference>
<dbReference type="SMR" id="A4Z2B6"/>
<dbReference type="STRING" id="114615.BRADO6688"/>
<dbReference type="KEGG" id="bra:BRADO6688"/>
<dbReference type="eggNOG" id="COG0711">
    <property type="taxonomic scope" value="Bacteria"/>
</dbReference>
<dbReference type="HOGENOM" id="CLU_079215_1_2_5"/>
<dbReference type="OrthoDB" id="9805716at2"/>
<dbReference type="Proteomes" id="UP000001994">
    <property type="component" value="Chromosome"/>
</dbReference>
<dbReference type="GO" id="GO:0005886">
    <property type="term" value="C:plasma membrane"/>
    <property type="evidence" value="ECO:0007669"/>
    <property type="project" value="UniProtKB-SubCell"/>
</dbReference>
<dbReference type="GO" id="GO:0045259">
    <property type="term" value="C:proton-transporting ATP synthase complex"/>
    <property type="evidence" value="ECO:0007669"/>
    <property type="project" value="UniProtKB-KW"/>
</dbReference>
<dbReference type="GO" id="GO:0046933">
    <property type="term" value="F:proton-transporting ATP synthase activity, rotational mechanism"/>
    <property type="evidence" value="ECO:0007669"/>
    <property type="project" value="UniProtKB-UniRule"/>
</dbReference>
<dbReference type="GO" id="GO:0046961">
    <property type="term" value="F:proton-transporting ATPase activity, rotational mechanism"/>
    <property type="evidence" value="ECO:0007669"/>
    <property type="project" value="TreeGrafter"/>
</dbReference>
<dbReference type="CDD" id="cd06503">
    <property type="entry name" value="ATP-synt_Fo_b"/>
    <property type="match status" value="1"/>
</dbReference>
<dbReference type="HAMAP" id="MF_01398">
    <property type="entry name" value="ATP_synth_b_bprime"/>
    <property type="match status" value="1"/>
</dbReference>
<dbReference type="InterPro" id="IPR002146">
    <property type="entry name" value="ATP_synth_b/b'su_bac/chlpt"/>
</dbReference>
<dbReference type="InterPro" id="IPR050059">
    <property type="entry name" value="ATP_synthase_B_chain"/>
</dbReference>
<dbReference type="PANTHER" id="PTHR33445:SF1">
    <property type="entry name" value="ATP SYNTHASE SUBUNIT B"/>
    <property type="match status" value="1"/>
</dbReference>
<dbReference type="PANTHER" id="PTHR33445">
    <property type="entry name" value="ATP SYNTHASE SUBUNIT B', CHLOROPLASTIC"/>
    <property type="match status" value="1"/>
</dbReference>
<dbReference type="Pfam" id="PF00430">
    <property type="entry name" value="ATP-synt_B"/>
    <property type="match status" value="1"/>
</dbReference>
<gene>
    <name type="primary">atpF2</name>
    <name type="synonym">atpG</name>
    <name type="ordered locus">BRADO6688</name>
</gene>
<feature type="chain" id="PRO_0000369004" description="ATP synthase subunit b 2">
    <location>
        <begin position="1"/>
        <end position="191"/>
    </location>
</feature>
<feature type="transmembrane region" description="Helical" evidence="2">
    <location>
        <begin position="38"/>
        <end position="60"/>
    </location>
</feature>
<feature type="region of interest" description="Disordered" evidence="3">
    <location>
        <begin position="1"/>
        <end position="31"/>
    </location>
</feature>
<feature type="compositionally biased region" description="Basic and acidic residues" evidence="3">
    <location>
        <begin position="1"/>
        <end position="12"/>
    </location>
</feature>
<name>ATPF2_BRASO</name>
<evidence type="ECO:0000250" key="1"/>
<evidence type="ECO:0000255" key="2"/>
<evidence type="ECO:0000256" key="3">
    <source>
        <dbReference type="SAM" id="MobiDB-lite"/>
    </source>
</evidence>
<evidence type="ECO:0000305" key="4"/>
<proteinExistence type="inferred from homology"/>
<accession>A4Z2B6</accession>
<sequence length="191" mass="19491">MAESHGEAKGGEAKGTASAHTEAEGGHGFPPFQKETFPSQIASLVIAFVALYVIVSRVALPKVGAVIDARQKSIDGDLAEAQRLKDESEAAMKAYETELATARARAQAIGAETRDKLAASSEAERKALEDSLAAKLAAAETSIASTRATAMSNVRGIAADAASAIVQQLTGKAPAAKTVEAAVDASLKGTA</sequence>
<comment type="function">
    <text evidence="1">F(1)F(0) ATP synthase produces ATP from ADP in the presence of a proton or sodium gradient. F-type ATPases consist of two structural domains, F(1) containing the extramembraneous catalytic core and F(0) containing the membrane proton channel, linked together by a central stalk and a peripheral stalk. During catalysis, ATP synthesis in the catalytic domain of F(1) is coupled via a rotary mechanism of the central stalk subunits to proton translocation (By similarity).</text>
</comment>
<comment type="function">
    <text evidence="1">Component of the F(0) channel, it forms part of the peripheral stalk, linking F(1) to F(0). The b'-subunit is a diverged and duplicated form of b found in plants and photosynthetic bacteria (By similarity).</text>
</comment>
<comment type="subunit">
    <text evidence="1">F-type ATPases have 2 components, F(1) - the catalytic core - and F(0) - the membrane proton channel. F(1) has five subunits: alpha(3), beta(3), gamma(1), delta(1), epsilon(1). F(0) has three main subunits: a(1), b(2) and c(10-14). The alpha and beta chains form an alternating ring which encloses part of the gamma chain. F(1) is attached to F(0) by a central stalk formed by the gamma and epsilon chains, while a peripheral stalk is formed by the delta and b chains (By similarity).</text>
</comment>
<comment type="subcellular location">
    <subcellularLocation>
        <location evidence="1">Cell inner membrane</location>
        <topology evidence="1">Single-pass membrane protein</topology>
    </subcellularLocation>
</comment>
<comment type="similarity">
    <text evidence="4">Belongs to the ATPase B chain family.</text>
</comment>
<protein>
    <recommendedName>
        <fullName>ATP synthase subunit b 2</fullName>
    </recommendedName>
    <alternativeName>
        <fullName>ATP synthase F(0) sector subunit b 2</fullName>
    </alternativeName>
    <alternativeName>
        <fullName>ATPase subunit I 2</fullName>
    </alternativeName>
    <alternativeName>
        <fullName>F-type ATPase subunit b 2</fullName>
        <shortName>F-ATPase subunit b 2</shortName>
    </alternativeName>
</protein>
<keyword id="KW-0066">ATP synthesis</keyword>
<keyword id="KW-0997">Cell inner membrane</keyword>
<keyword id="KW-1003">Cell membrane</keyword>
<keyword id="KW-0138">CF(0)</keyword>
<keyword id="KW-0375">Hydrogen ion transport</keyword>
<keyword id="KW-0406">Ion transport</keyword>
<keyword id="KW-0472">Membrane</keyword>
<keyword id="KW-1185">Reference proteome</keyword>
<keyword id="KW-0812">Transmembrane</keyword>
<keyword id="KW-1133">Transmembrane helix</keyword>
<keyword id="KW-0813">Transport</keyword>